<evidence type="ECO:0000250" key="1"/>
<evidence type="ECO:0000250" key="2">
    <source>
        <dbReference type="UniProtKB" id="Q6AYA0"/>
    </source>
</evidence>
<evidence type="ECO:0000250" key="3">
    <source>
        <dbReference type="UniProtKB" id="Q969X0"/>
    </source>
</evidence>
<evidence type="ECO:0000250" key="4">
    <source>
        <dbReference type="UniProtKB" id="Q99LE1"/>
    </source>
</evidence>
<evidence type="ECO:0000255" key="5"/>
<evidence type="ECO:0000255" key="6">
    <source>
        <dbReference type="PROSITE-ProRule" id="PRU01112"/>
    </source>
</evidence>
<evidence type="ECO:0000255" key="7">
    <source>
        <dbReference type="PROSITE-ProRule" id="PRU01113"/>
    </source>
</evidence>
<evidence type="ECO:0000256" key="8">
    <source>
        <dbReference type="SAM" id="MobiDB-lite"/>
    </source>
</evidence>
<evidence type="ECO:0000305" key="9"/>
<keyword id="KW-0966">Cell projection</keyword>
<keyword id="KW-0969">Cilium</keyword>
<keyword id="KW-0175">Coiled coil</keyword>
<keyword id="KW-0963">Cytoplasm</keyword>
<keyword id="KW-0206">Cytoskeleton</keyword>
<keyword id="KW-0653">Protein transport</keyword>
<keyword id="KW-1185">Reference proteome</keyword>
<keyword id="KW-0813">Transport</keyword>
<gene>
    <name type="primary">RILPL2</name>
</gene>
<dbReference type="EMBL" id="BC134625">
    <property type="protein sequence ID" value="AAI34626.1"/>
    <property type="molecule type" value="mRNA"/>
</dbReference>
<dbReference type="RefSeq" id="NP_001077187.1">
    <property type="nucleotide sequence ID" value="NM_001083718.1"/>
</dbReference>
<dbReference type="SMR" id="A4IFK7"/>
<dbReference type="FunCoup" id="A4IFK7">
    <property type="interactions" value="701"/>
</dbReference>
<dbReference type="STRING" id="9913.ENSBTAP00000010264"/>
<dbReference type="PaxDb" id="9913-ENSBTAP00000010264"/>
<dbReference type="GeneID" id="533228"/>
<dbReference type="KEGG" id="bta:533228"/>
<dbReference type="CTD" id="196383"/>
<dbReference type="VEuPathDB" id="HostDB:ENSBTAG00000007804"/>
<dbReference type="eggNOG" id="ENOG502S08B">
    <property type="taxonomic scope" value="Eukaryota"/>
</dbReference>
<dbReference type="HOGENOM" id="CLU_096533_1_0_1"/>
<dbReference type="InParanoid" id="A4IFK7"/>
<dbReference type="OMA" id="DVYDMSY"/>
<dbReference type="OrthoDB" id="10069524at2759"/>
<dbReference type="TreeFam" id="TF313489"/>
<dbReference type="Proteomes" id="UP000009136">
    <property type="component" value="Chromosome 17"/>
</dbReference>
<dbReference type="Bgee" id="ENSBTAG00000007804">
    <property type="expression patterns" value="Expressed in blood and 104 other cell types or tissues"/>
</dbReference>
<dbReference type="GO" id="GO:0005813">
    <property type="term" value="C:centrosome"/>
    <property type="evidence" value="ECO:0000250"/>
    <property type="project" value="UniProtKB"/>
</dbReference>
<dbReference type="GO" id="GO:0036064">
    <property type="term" value="C:ciliary basal body"/>
    <property type="evidence" value="ECO:0000318"/>
    <property type="project" value="GO_Central"/>
</dbReference>
<dbReference type="GO" id="GO:0005929">
    <property type="term" value="C:cilium"/>
    <property type="evidence" value="ECO:0000250"/>
    <property type="project" value="UniProtKB"/>
</dbReference>
<dbReference type="GO" id="GO:0005737">
    <property type="term" value="C:cytoplasm"/>
    <property type="evidence" value="ECO:0000318"/>
    <property type="project" value="GO_Central"/>
</dbReference>
<dbReference type="GO" id="GO:0005829">
    <property type="term" value="C:cytosol"/>
    <property type="evidence" value="ECO:0007669"/>
    <property type="project" value="UniProtKB-SubCell"/>
</dbReference>
<dbReference type="GO" id="GO:0016020">
    <property type="term" value="C:membrane"/>
    <property type="evidence" value="ECO:0007669"/>
    <property type="project" value="GOC"/>
</dbReference>
<dbReference type="GO" id="GO:0051959">
    <property type="term" value="F:dynein light intermediate chain binding"/>
    <property type="evidence" value="ECO:0000318"/>
    <property type="project" value="GO_Central"/>
</dbReference>
<dbReference type="GO" id="GO:0046983">
    <property type="term" value="F:protein dimerization activity"/>
    <property type="evidence" value="ECO:0007669"/>
    <property type="project" value="InterPro"/>
</dbReference>
<dbReference type="GO" id="GO:0031267">
    <property type="term" value="F:small GTPase binding"/>
    <property type="evidence" value="ECO:0000318"/>
    <property type="project" value="GO_Central"/>
</dbReference>
<dbReference type="GO" id="GO:0060271">
    <property type="term" value="P:cilium assembly"/>
    <property type="evidence" value="ECO:0000318"/>
    <property type="project" value="GO_Central"/>
</dbReference>
<dbReference type="GO" id="GO:0003382">
    <property type="term" value="P:epithelial cell morphogenesis"/>
    <property type="evidence" value="ECO:0000250"/>
    <property type="project" value="UniProtKB"/>
</dbReference>
<dbReference type="GO" id="GO:1903445">
    <property type="term" value="P:protein transport from ciliary membrane to plasma membrane"/>
    <property type="evidence" value="ECO:0000250"/>
    <property type="project" value="UniProtKB"/>
</dbReference>
<dbReference type="CDD" id="cd14445">
    <property type="entry name" value="RILP-like"/>
    <property type="match status" value="1"/>
</dbReference>
<dbReference type="FunFam" id="1.20.58.1770:FF:000003">
    <property type="entry name" value="RILP-like protein 2 isoform X1"/>
    <property type="match status" value="1"/>
</dbReference>
<dbReference type="Gene3D" id="1.20.58.1770">
    <property type="match status" value="1"/>
</dbReference>
<dbReference type="Gene3D" id="6.10.230.10">
    <property type="match status" value="1"/>
</dbReference>
<dbReference type="InterPro" id="IPR051241">
    <property type="entry name" value="DZIP_RILPL"/>
</dbReference>
<dbReference type="InterPro" id="IPR034743">
    <property type="entry name" value="RH1"/>
</dbReference>
<dbReference type="InterPro" id="IPR034744">
    <property type="entry name" value="RH2"/>
</dbReference>
<dbReference type="InterPro" id="IPR021563">
    <property type="entry name" value="RILP_dimer"/>
</dbReference>
<dbReference type="PANTHER" id="PTHR21502:SF2">
    <property type="entry name" value="RILP-LIKE PROTEIN 2"/>
    <property type="match status" value="1"/>
</dbReference>
<dbReference type="PANTHER" id="PTHR21502">
    <property type="entry name" value="ZINC FINGER PROTEIN DZIP1"/>
    <property type="match status" value="1"/>
</dbReference>
<dbReference type="Pfam" id="PF09744">
    <property type="entry name" value="RH1"/>
    <property type="match status" value="1"/>
</dbReference>
<dbReference type="Pfam" id="PF11461">
    <property type="entry name" value="RILP"/>
    <property type="match status" value="1"/>
</dbReference>
<dbReference type="SUPFAM" id="SSF161256">
    <property type="entry name" value="RILP dimerisation region"/>
    <property type="match status" value="1"/>
</dbReference>
<dbReference type="PROSITE" id="PS51776">
    <property type="entry name" value="RH1"/>
    <property type="match status" value="1"/>
</dbReference>
<dbReference type="PROSITE" id="PS51777">
    <property type="entry name" value="RH2"/>
    <property type="match status" value="1"/>
</dbReference>
<reference key="1">
    <citation type="submission" date="2007-03" db="EMBL/GenBank/DDBJ databases">
        <authorList>
            <consortium name="NIH - Mammalian Gene Collection (MGC) project"/>
        </authorList>
    </citation>
    <scope>NUCLEOTIDE SEQUENCE [LARGE SCALE MRNA]</scope>
    <source>
        <strain>Hereford</strain>
        <tissue>Brain cortex</tissue>
    </source>
</reference>
<sequence length="206" mass="23435">MEEPPLREEEEEEEEDEAGPEGALGKSPLQLTAEDVYDISYVMGRELMALGSDPRVTQLQFKIVRVLEMLETLVNEGNLTVEELRMERDNLRKEVEGLRREGSAAGPEVNLGPDKMVVDLTDPNRPRFTLQELRDVLQERNKLKSQLLVVQEELQCYKSGLIPPREGPGGRREKEALFPRGSNANSNKEEKTIIRKLFSFRSGKQT</sequence>
<accession>A4IFK7</accession>
<comment type="function">
    <text evidence="1">Involved in cell shape and neuronal morphogenesis, positively regulating the establishment and maintenance of dendritic spines. Plays a role in cellular protein transport, including protein transport away from primary cilia. May function via activation of RAC1 and PAK1 (By similarity).</text>
</comment>
<comment type="subunit">
    <text evidence="2 3 4">Homodimer (By similarity). Interacts with RAC1 (By similarity). Interacts (via N-terminus) with MYO5A, the interaction is required for its role in dendrite formation (By similarity). Interacts with RAB8A; interaction is dependent on the phosphorylation of RAB8A on 'Thr-72' (By similarity). Interacts with RAB10 and RAB12; interaction is dependent on the phosphorylation of 'Thr-73' on RAB10 and 'Ser-105' on RAB12 (By similarity).</text>
</comment>
<comment type="subcellular location">
    <subcellularLocation>
        <location evidence="1">Cytoplasm</location>
        <location evidence="1">Cytosol</location>
    </subcellularLocation>
    <subcellularLocation>
        <location evidence="1">Cytoplasm</location>
        <location evidence="1">Cytoskeleton</location>
        <location evidence="1">Microtubule organizing center</location>
        <location evidence="1">Centrosome</location>
    </subcellularLocation>
    <subcellularLocation>
        <location evidence="1">Cell projection</location>
        <location evidence="1">Cilium</location>
    </subcellularLocation>
</comment>
<comment type="similarity">
    <text evidence="9">Belongs to the RILPL family.</text>
</comment>
<organism>
    <name type="scientific">Bos taurus</name>
    <name type="common">Bovine</name>
    <dbReference type="NCBI Taxonomy" id="9913"/>
    <lineage>
        <taxon>Eukaryota</taxon>
        <taxon>Metazoa</taxon>
        <taxon>Chordata</taxon>
        <taxon>Craniata</taxon>
        <taxon>Vertebrata</taxon>
        <taxon>Euteleostomi</taxon>
        <taxon>Mammalia</taxon>
        <taxon>Eutheria</taxon>
        <taxon>Laurasiatheria</taxon>
        <taxon>Artiodactyla</taxon>
        <taxon>Ruminantia</taxon>
        <taxon>Pecora</taxon>
        <taxon>Bovidae</taxon>
        <taxon>Bovinae</taxon>
        <taxon>Bos</taxon>
    </lineage>
</organism>
<name>RIPL2_BOVIN</name>
<protein>
    <recommendedName>
        <fullName>RILP-like protein 2</fullName>
    </recommendedName>
    <alternativeName>
        <fullName>Rab-interacting lysosomal-like protein 2</fullName>
    </alternativeName>
</protein>
<feature type="chain" id="PRO_0000317004" description="RILP-like protein 2">
    <location>
        <begin position="1"/>
        <end position="206"/>
    </location>
</feature>
<feature type="domain" description="RH1" evidence="6">
    <location>
        <begin position="19"/>
        <end position="108"/>
    </location>
</feature>
<feature type="domain" description="RH2" evidence="7">
    <location>
        <begin position="125"/>
        <end position="197"/>
    </location>
</feature>
<feature type="region of interest" description="Disordered" evidence="8">
    <location>
        <begin position="1"/>
        <end position="29"/>
    </location>
</feature>
<feature type="region of interest" description="Disordered" evidence="8">
    <location>
        <begin position="161"/>
        <end position="189"/>
    </location>
</feature>
<feature type="coiled-coil region" evidence="5">
    <location>
        <begin position="67"/>
        <end position="159"/>
    </location>
</feature>
<feature type="compositionally biased region" description="Acidic residues" evidence="8">
    <location>
        <begin position="8"/>
        <end position="19"/>
    </location>
</feature>
<feature type="compositionally biased region" description="Basic and acidic residues" evidence="8">
    <location>
        <begin position="168"/>
        <end position="177"/>
    </location>
</feature>
<proteinExistence type="evidence at transcript level"/>